<sequence>MQTFLYPRTWLILGLLLLGSGCAVTPKTITQVPNTARPAAPSQAVYNSGGIYSPATYRPLLEDKRARLVGDTIVINITENTSATKSGSNSASKSGAVNAGITGLFGHNVPKASFNAASDNAYDDAAASNSRNVFTGTISATVTEVLPNGHLVVSGEKQVAFDRGTEFVRFSGVVDPMYVAAGNSVPSSRVADARIEYRTNSNLDTAQVMSILTRFFLSFAPL</sequence>
<organism>
    <name type="scientific">Methylobacillus flagellatus (strain ATCC 51484 / DSM 6875 / VKM B-1610 / KT)</name>
    <dbReference type="NCBI Taxonomy" id="265072"/>
    <lineage>
        <taxon>Bacteria</taxon>
        <taxon>Pseudomonadati</taxon>
        <taxon>Pseudomonadota</taxon>
        <taxon>Betaproteobacteria</taxon>
        <taxon>Nitrosomonadales</taxon>
        <taxon>Methylophilaceae</taxon>
        <taxon>Methylobacillus</taxon>
    </lineage>
</organism>
<keyword id="KW-0975">Bacterial flagellum</keyword>
<keyword id="KW-0998">Cell outer membrane</keyword>
<keyword id="KW-0449">Lipoprotein</keyword>
<keyword id="KW-0472">Membrane</keyword>
<keyword id="KW-0564">Palmitate</keyword>
<keyword id="KW-1185">Reference proteome</keyword>
<keyword id="KW-0732">Signal</keyword>
<evidence type="ECO:0000255" key="1">
    <source>
        <dbReference type="HAMAP-Rule" id="MF_00415"/>
    </source>
</evidence>
<feature type="signal peptide" evidence="1">
    <location>
        <begin position="1"/>
        <end position="21"/>
    </location>
</feature>
<feature type="chain" id="PRO_1000060074" description="Flagellar L-ring protein">
    <location>
        <begin position="22"/>
        <end position="222"/>
    </location>
</feature>
<feature type="lipid moiety-binding region" description="N-palmitoyl cysteine" evidence="1">
    <location>
        <position position="22"/>
    </location>
</feature>
<feature type="lipid moiety-binding region" description="S-diacylglycerol cysteine" evidence="1">
    <location>
        <position position="22"/>
    </location>
</feature>
<name>FLGH_METFK</name>
<gene>
    <name evidence="1" type="primary">flgH</name>
    <name type="ordered locus">Mfla_1960</name>
</gene>
<protein>
    <recommendedName>
        <fullName evidence="1">Flagellar L-ring protein</fullName>
    </recommendedName>
    <alternativeName>
        <fullName evidence="1">Basal body L-ring protein</fullName>
    </alternativeName>
</protein>
<proteinExistence type="inferred from homology"/>
<reference key="1">
    <citation type="submission" date="2006-03" db="EMBL/GenBank/DDBJ databases">
        <title>Complete sequence of Methylobacillus flagellatus KT.</title>
        <authorList>
            <consortium name="US DOE Joint Genome Institute"/>
            <person name="Copeland A."/>
            <person name="Lucas S."/>
            <person name="Lapidus A."/>
            <person name="Barry K."/>
            <person name="Detter J.C."/>
            <person name="Glavina del Rio T."/>
            <person name="Hammon N."/>
            <person name="Israni S."/>
            <person name="Dalin E."/>
            <person name="Tice H."/>
            <person name="Pitluck S."/>
            <person name="Brettin T."/>
            <person name="Bruce D."/>
            <person name="Han C."/>
            <person name="Tapia R."/>
            <person name="Saunders E."/>
            <person name="Gilna P."/>
            <person name="Schmutz J."/>
            <person name="Larimer F."/>
            <person name="Land M."/>
            <person name="Kyrpides N."/>
            <person name="Anderson I."/>
            <person name="Richardson P."/>
        </authorList>
    </citation>
    <scope>NUCLEOTIDE SEQUENCE [LARGE SCALE GENOMIC DNA]</scope>
    <source>
        <strain>ATCC 51484 / DSM 6875 / VKM B-1610 / KT</strain>
    </source>
</reference>
<comment type="function">
    <text evidence="1">Assembles around the rod to form the L-ring and probably protects the motor/basal body from shearing forces during rotation.</text>
</comment>
<comment type="subunit">
    <text evidence="1">The basal body constitutes a major portion of the flagellar organelle and consists of four rings (L,P,S, and M) mounted on a central rod.</text>
</comment>
<comment type="subcellular location">
    <subcellularLocation>
        <location evidence="1">Cell outer membrane</location>
        <topology evidence="1">Lipid-anchor</topology>
    </subcellularLocation>
    <subcellularLocation>
        <location evidence="1">Bacterial flagellum basal body</location>
    </subcellularLocation>
</comment>
<comment type="similarity">
    <text evidence="1">Belongs to the FlgH family.</text>
</comment>
<accession>Q1GZW0</accession>
<dbReference type="EMBL" id="CP000284">
    <property type="protein sequence ID" value="ABE50227.1"/>
    <property type="molecule type" value="Genomic_DNA"/>
</dbReference>
<dbReference type="RefSeq" id="WP_011480181.1">
    <property type="nucleotide sequence ID" value="NC_007947.1"/>
</dbReference>
<dbReference type="SMR" id="Q1GZW0"/>
<dbReference type="STRING" id="265072.Mfla_1960"/>
<dbReference type="DNASU" id="4001047"/>
<dbReference type="KEGG" id="mfa:Mfla_1960"/>
<dbReference type="eggNOG" id="COG2063">
    <property type="taxonomic scope" value="Bacteria"/>
</dbReference>
<dbReference type="HOGENOM" id="CLU_069313_0_0_4"/>
<dbReference type="OrthoDB" id="9789463at2"/>
<dbReference type="Proteomes" id="UP000002440">
    <property type="component" value="Chromosome"/>
</dbReference>
<dbReference type="GO" id="GO:0009427">
    <property type="term" value="C:bacterial-type flagellum basal body, distal rod, L ring"/>
    <property type="evidence" value="ECO:0007669"/>
    <property type="project" value="InterPro"/>
</dbReference>
<dbReference type="GO" id="GO:0009279">
    <property type="term" value="C:cell outer membrane"/>
    <property type="evidence" value="ECO:0007669"/>
    <property type="project" value="UniProtKB-SubCell"/>
</dbReference>
<dbReference type="GO" id="GO:0003774">
    <property type="term" value="F:cytoskeletal motor activity"/>
    <property type="evidence" value="ECO:0007669"/>
    <property type="project" value="InterPro"/>
</dbReference>
<dbReference type="GO" id="GO:0071973">
    <property type="term" value="P:bacterial-type flagellum-dependent cell motility"/>
    <property type="evidence" value="ECO:0007669"/>
    <property type="project" value="InterPro"/>
</dbReference>
<dbReference type="HAMAP" id="MF_00415">
    <property type="entry name" value="FlgH"/>
    <property type="match status" value="1"/>
</dbReference>
<dbReference type="InterPro" id="IPR000527">
    <property type="entry name" value="Flag_Lring"/>
</dbReference>
<dbReference type="PANTHER" id="PTHR34933">
    <property type="entry name" value="FLAGELLAR L-RING PROTEIN"/>
    <property type="match status" value="1"/>
</dbReference>
<dbReference type="PANTHER" id="PTHR34933:SF3">
    <property type="entry name" value="FLAGELLAR L-RING PROTEIN"/>
    <property type="match status" value="1"/>
</dbReference>
<dbReference type="Pfam" id="PF02107">
    <property type="entry name" value="FlgH"/>
    <property type="match status" value="1"/>
</dbReference>
<dbReference type="PRINTS" id="PR01008">
    <property type="entry name" value="FLGLRINGFLGH"/>
</dbReference>